<dbReference type="EC" id="6.1.1.1" evidence="1"/>
<dbReference type="EMBL" id="BX571859">
    <property type="protein sequence ID" value="CAE12496.1"/>
    <property type="molecule type" value="Genomic_DNA"/>
</dbReference>
<dbReference type="RefSeq" id="WP_011144601.1">
    <property type="nucleotide sequence ID" value="NC_005126.1"/>
</dbReference>
<dbReference type="SMR" id="Q7N9W0"/>
<dbReference type="STRING" id="243265.plu0201"/>
<dbReference type="GeneID" id="48846497"/>
<dbReference type="KEGG" id="plu:plu0201"/>
<dbReference type="eggNOG" id="COG0162">
    <property type="taxonomic scope" value="Bacteria"/>
</dbReference>
<dbReference type="HOGENOM" id="CLU_024003_5_0_6"/>
<dbReference type="OrthoDB" id="9804243at2"/>
<dbReference type="Proteomes" id="UP000002514">
    <property type="component" value="Chromosome"/>
</dbReference>
<dbReference type="GO" id="GO:0005829">
    <property type="term" value="C:cytosol"/>
    <property type="evidence" value="ECO:0007669"/>
    <property type="project" value="TreeGrafter"/>
</dbReference>
<dbReference type="GO" id="GO:0005524">
    <property type="term" value="F:ATP binding"/>
    <property type="evidence" value="ECO:0007669"/>
    <property type="project" value="UniProtKB-UniRule"/>
</dbReference>
<dbReference type="GO" id="GO:0003723">
    <property type="term" value="F:RNA binding"/>
    <property type="evidence" value="ECO:0007669"/>
    <property type="project" value="UniProtKB-KW"/>
</dbReference>
<dbReference type="GO" id="GO:0004831">
    <property type="term" value="F:tyrosine-tRNA ligase activity"/>
    <property type="evidence" value="ECO:0007669"/>
    <property type="project" value="UniProtKB-UniRule"/>
</dbReference>
<dbReference type="GO" id="GO:0006437">
    <property type="term" value="P:tyrosyl-tRNA aminoacylation"/>
    <property type="evidence" value="ECO:0007669"/>
    <property type="project" value="UniProtKB-UniRule"/>
</dbReference>
<dbReference type="CDD" id="cd00165">
    <property type="entry name" value="S4"/>
    <property type="match status" value="1"/>
</dbReference>
<dbReference type="CDD" id="cd00805">
    <property type="entry name" value="TyrRS_core"/>
    <property type="match status" value="1"/>
</dbReference>
<dbReference type="Gene3D" id="3.40.50.620">
    <property type="entry name" value="HUPs"/>
    <property type="match status" value="1"/>
</dbReference>
<dbReference type="Gene3D" id="3.10.290.10">
    <property type="entry name" value="RNA-binding S4 domain"/>
    <property type="match status" value="1"/>
</dbReference>
<dbReference type="Gene3D" id="1.10.240.10">
    <property type="entry name" value="Tyrosyl-Transfer RNA Synthetase"/>
    <property type="match status" value="1"/>
</dbReference>
<dbReference type="HAMAP" id="MF_02007">
    <property type="entry name" value="Tyr_tRNA_synth_type2"/>
    <property type="match status" value="1"/>
</dbReference>
<dbReference type="InterPro" id="IPR001412">
    <property type="entry name" value="aa-tRNA-synth_I_CS"/>
</dbReference>
<dbReference type="InterPro" id="IPR002305">
    <property type="entry name" value="aa-tRNA-synth_Ic"/>
</dbReference>
<dbReference type="InterPro" id="IPR014729">
    <property type="entry name" value="Rossmann-like_a/b/a_fold"/>
</dbReference>
<dbReference type="InterPro" id="IPR002942">
    <property type="entry name" value="S4_RNA-bd"/>
</dbReference>
<dbReference type="InterPro" id="IPR036986">
    <property type="entry name" value="S4_RNA-bd_sf"/>
</dbReference>
<dbReference type="InterPro" id="IPR002307">
    <property type="entry name" value="Tyr-tRNA-ligase"/>
</dbReference>
<dbReference type="InterPro" id="IPR024088">
    <property type="entry name" value="Tyr-tRNA-ligase_bac-type"/>
</dbReference>
<dbReference type="InterPro" id="IPR024108">
    <property type="entry name" value="Tyr-tRNA-ligase_bac_2"/>
</dbReference>
<dbReference type="NCBIfam" id="TIGR00234">
    <property type="entry name" value="tyrS"/>
    <property type="match status" value="1"/>
</dbReference>
<dbReference type="PANTHER" id="PTHR11766:SF1">
    <property type="entry name" value="TYROSINE--TRNA LIGASE"/>
    <property type="match status" value="1"/>
</dbReference>
<dbReference type="PANTHER" id="PTHR11766">
    <property type="entry name" value="TYROSYL-TRNA SYNTHETASE"/>
    <property type="match status" value="1"/>
</dbReference>
<dbReference type="Pfam" id="PF01479">
    <property type="entry name" value="S4"/>
    <property type="match status" value="1"/>
</dbReference>
<dbReference type="Pfam" id="PF00579">
    <property type="entry name" value="tRNA-synt_1b"/>
    <property type="match status" value="1"/>
</dbReference>
<dbReference type="PRINTS" id="PR01040">
    <property type="entry name" value="TRNASYNTHTYR"/>
</dbReference>
<dbReference type="SUPFAM" id="SSF55174">
    <property type="entry name" value="Alpha-L RNA-binding motif"/>
    <property type="match status" value="1"/>
</dbReference>
<dbReference type="SUPFAM" id="SSF52374">
    <property type="entry name" value="Nucleotidylyl transferase"/>
    <property type="match status" value="1"/>
</dbReference>
<dbReference type="PROSITE" id="PS00178">
    <property type="entry name" value="AA_TRNA_LIGASE_I"/>
    <property type="match status" value="1"/>
</dbReference>
<dbReference type="PROSITE" id="PS50889">
    <property type="entry name" value="S4"/>
    <property type="match status" value="1"/>
</dbReference>
<keyword id="KW-0030">Aminoacyl-tRNA synthetase</keyword>
<keyword id="KW-0067">ATP-binding</keyword>
<keyword id="KW-0963">Cytoplasm</keyword>
<keyword id="KW-0436">Ligase</keyword>
<keyword id="KW-0547">Nucleotide-binding</keyword>
<keyword id="KW-0648">Protein biosynthesis</keyword>
<keyword id="KW-1185">Reference proteome</keyword>
<keyword id="KW-0694">RNA-binding</keyword>
<protein>
    <recommendedName>
        <fullName evidence="1">Tyrosine--tRNA ligase 2</fullName>
        <ecNumber evidence="1">6.1.1.1</ecNumber>
    </recommendedName>
    <alternativeName>
        <fullName evidence="1">Tyrosyl-tRNA synthetase 2</fullName>
        <shortName evidence="1">TyrRS 2</shortName>
    </alternativeName>
</protein>
<reference key="1">
    <citation type="journal article" date="2003" name="Nat. Biotechnol.">
        <title>The genome sequence of the entomopathogenic bacterium Photorhabdus luminescens.</title>
        <authorList>
            <person name="Duchaud E."/>
            <person name="Rusniok C."/>
            <person name="Frangeul L."/>
            <person name="Buchrieser C."/>
            <person name="Givaudan A."/>
            <person name="Taourit S."/>
            <person name="Bocs S."/>
            <person name="Boursaux-Eude C."/>
            <person name="Chandler M."/>
            <person name="Charles J.-F."/>
            <person name="Dassa E."/>
            <person name="Derose R."/>
            <person name="Derzelle S."/>
            <person name="Freyssinet G."/>
            <person name="Gaudriault S."/>
            <person name="Medigue C."/>
            <person name="Lanois A."/>
            <person name="Powell K."/>
            <person name="Siguier P."/>
            <person name="Vincent R."/>
            <person name="Wingate V."/>
            <person name="Zouine M."/>
            <person name="Glaser P."/>
            <person name="Boemare N."/>
            <person name="Danchin A."/>
            <person name="Kunst F."/>
        </authorList>
    </citation>
    <scope>NUCLEOTIDE SEQUENCE [LARGE SCALE GENOMIC DNA]</scope>
    <source>
        <strain>DSM 15139 / CIP 105565 / TT01</strain>
    </source>
</reference>
<gene>
    <name evidence="1" type="primary">tyrS2</name>
    <name type="ordered locus">plu0201</name>
</gene>
<sequence length="399" mass="45104">MKENIDKLLSNIAIMEPPLGLQDKLALARQENRKLTIKLGFDPTAPDLHLGHAVVLQKLKDFQDEGHRIVVIIGDFTAGIGDPTGRNKLRPPLTPEQINKNSQTYINQLAKVINIENIEIRKNSEWFNNMPFSNVIKLISKITLAQIMHRDDFKTRFESKAPVHLHEIIYPILQGYDSVMIDADIELGGTDQLFNNLVGRTLQEAYEKKGQIVITMPLLEGLDGIEKMSKSKNNYIGLTDNANDMYGKVMSIPDSVIINYLTLATDMEAEKQSAIVSQLELGLNPMKIKKDIAYNIVKRYHDDISAKEATEHFERVVQKRTPEEADHDVLILPKGSYITLLDLCSVALPAISRSELRRLIRSGAVRVDKSKEDDEIKNIEVIPGTLIWIGKRYKFRIGS</sequence>
<accession>Q7N9W0</accession>
<name>SYY2_PHOLL</name>
<organism>
    <name type="scientific">Photorhabdus laumondii subsp. laumondii (strain DSM 15139 / CIP 105565 / TT01)</name>
    <name type="common">Photorhabdus luminescens subsp. laumondii</name>
    <dbReference type="NCBI Taxonomy" id="243265"/>
    <lineage>
        <taxon>Bacteria</taxon>
        <taxon>Pseudomonadati</taxon>
        <taxon>Pseudomonadota</taxon>
        <taxon>Gammaproteobacteria</taxon>
        <taxon>Enterobacterales</taxon>
        <taxon>Morganellaceae</taxon>
        <taxon>Photorhabdus</taxon>
    </lineage>
</organism>
<evidence type="ECO:0000255" key="1">
    <source>
        <dbReference type="HAMAP-Rule" id="MF_02007"/>
    </source>
</evidence>
<feature type="chain" id="PRO_0000236743" description="Tyrosine--tRNA ligase 2">
    <location>
        <begin position="1"/>
        <end position="399"/>
    </location>
</feature>
<feature type="domain" description="S4 RNA-binding" evidence="1">
    <location>
        <begin position="338"/>
        <end position="398"/>
    </location>
</feature>
<feature type="short sequence motif" description="'HIGH' region">
    <location>
        <begin position="43"/>
        <end position="52"/>
    </location>
</feature>
<feature type="short sequence motif" description="'KMSKS' region">
    <location>
        <begin position="227"/>
        <end position="231"/>
    </location>
</feature>
<feature type="binding site" evidence="1">
    <location>
        <position position="230"/>
    </location>
    <ligand>
        <name>ATP</name>
        <dbReference type="ChEBI" id="CHEBI:30616"/>
    </ligand>
</feature>
<proteinExistence type="inferred from homology"/>
<comment type="function">
    <text evidence="1">Catalyzes the attachment of tyrosine to tRNA(Tyr) in a two-step reaction: tyrosine is first activated by ATP to form Tyr-AMP and then transferred to the acceptor end of tRNA(Tyr).</text>
</comment>
<comment type="catalytic activity">
    <reaction evidence="1">
        <text>tRNA(Tyr) + L-tyrosine + ATP = L-tyrosyl-tRNA(Tyr) + AMP + diphosphate + H(+)</text>
        <dbReference type="Rhea" id="RHEA:10220"/>
        <dbReference type="Rhea" id="RHEA-COMP:9706"/>
        <dbReference type="Rhea" id="RHEA-COMP:9707"/>
        <dbReference type="ChEBI" id="CHEBI:15378"/>
        <dbReference type="ChEBI" id="CHEBI:30616"/>
        <dbReference type="ChEBI" id="CHEBI:33019"/>
        <dbReference type="ChEBI" id="CHEBI:58315"/>
        <dbReference type="ChEBI" id="CHEBI:78442"/>
        <dbReference type="ChEBI" id="CHEBI:78536"/>
        <dbReference type="ChEBI" id="CHEBI:456215"/>
        <dbReference type="EC" id="6.1.1.1"/>
    </reaction>
</comment>
<comment type="subunit">
    <text evidence="1">Homodimer.</text>
</comment>
<comment type="subcellular location">
    <subcellularLocation>
        <location evidence="1">Cytoplasm</location>
    </subcellularLocation>
</comment>
<comment type="similarity">
    <text evidence="1">Belongs to the class-I aminoacyl-tRNA synthetase family. TyrS type 2 subfamily.</text>
</comment>